<proteinExistence type="inferred from homology"/>
<accession>Q6LWN2</accession>
<protein>
    <recommendedName>
        <fullName evidence="1">Digeranylgeranylglyceryl phosphate synthase</fullName>
        <shortName evidence="1">DGGGP synthase</shortName>
        <shortName evidence="1">DGGGPS</shortName>
        <ecNumber evidence="1">2.5.1.42</ecNumber>
    </recommendedName>
    <alternativeName>
        <fullName evidence="1">(S)-2,3-di-O-geranylgeranylglyceryl phosphate synthase</fullName>
    </alternativeName>
    <alternativeName>
        <fullName evidence="1">Geranylgeranylglycerol-phosphate geranylgeranyltransferase</fullName>
    </alternativeName>
</protein>
<organism>
    <name type="scientific">Methanococcus maripaludis (strain DSM 14266 / JCM 13030 / NBRC 101832 / S2 / LL)</name>
    <dbReference type="NCBI Taxonomy" id="267377"/>
    <lineage>
        <taxon>Archaea</taxon>
        <taxon>Methanobacteriati</taxon>
        <taxon>Methanobacteriota</taxon>
        <taxon>Methanomada group</taxon>
        <taxon>Methanococci</taxon>
        <taxon>Methanococcales</taxon>
        <taxon>Methanococcaceae</taxon>
        <taxon>Methanococcus</taxon>
    </lineage>
</organism>
<evidence type="ECO:0000255" key="1">
    <source>
        <dbReference type="HAMAP-Rule" id="MF_01286"/>
    </source>
</evidence>
<keyword id="KW-1003">Cell membrane</keyword>
<keyword id="KW-0444">Lipid biosynthesis</keyword>
<keyword id="KW-0443">Lipid metabolism</keyword>
<keyword id="KW-0460">Magnesium</keyword>
<keyword id="KW-0472">Membrane</keyword>
<keyword id="KW-0594">Phospholipid biosynthesis</keyword>
<keyword id="KW-1208">Phospholipid metabolism</keyword>
<keyword id="KW-1185">Reference proteome</keyword>
<keyword id="KW-0808">Transferase</keyword>
<keyword id="KW-0812">Transmembrane</keyword>
<keyword id="KW-1133">Transmembrane helix</keyword>
<reference key="1">
    <citation type="journal article" date="2004" name="J. Bacteriol.">
        <title>Complete genome sequence of the genetically tractable hydrogenotrophic methanogen Methanococcus maripaludis.</title>
        <authorList>
            <person name="Hendrickson E.L."/>
            <person name="Kaul R."/>
            <person name="Zhou Y."/>
            <person name="Bovee D."/>
            <person name="Chapman P."/>
            <person name="Chung J."/>
            <person name="Conway de Macario E."/>
            <person name="Dodsworth J.A."/>
            <person name="Gillett W."/>
            <person name="Graham D.E."/>
            <person name="Hackett M."/>
            <person name="Haydock A.K."/>
            <person name="Kang A."/>
            <person name="Land M.L."/>
            <person name="Levy R."/>
            <person name="Lie T.J."/>
            <person name="Major T.A."/>
            <person name="Moore B.C."/>
            <person name="Porat I."/>
            <person name="Palmeiri A."/>
            <person name="Rouse G."/>
            <person name="Saenphimmachak C."/>
            <person name="Soell D."/>
            <person name="Van Dien S."/>
            <person name="Wang T."/>
            <person name="Whitman W.B."/>
            <person name="Xia Q."/>
            <person name="Zhang Y."/>
            <person name="Larimer F.W."/>
            <person name="Olson M.V."/>
            <person name="Leigh J.A."/>
        </authorList>
    </citation>
    <scope>NUCLEOTIDE SEQUENCE [LARGE SCALE GENOMIC DNA]</scope>
    <source>
        <strain>DSM 14266 / JCM 13030 / NBRC 101832 / S2 / LL</strain>
    </source>
</reference>
<dbReference type="EC" id="2.5.1.42" evidence="1"/>
<dbReference type="EMBL" id="BX950229">
    <property type="protein sequence ID" value="CAF31233.1"/>
    <property type="molecule type" value="Genomic_DNA"/>
</dbReference>
<dbReference type="RefSeq" id="WP_011171621.1">
    <property type="nucleotide sequence ID" value="NC_005791.1"/>
</dbReference>
<dbReference type="SMR" id="Q6LWN2"/>
<dbReference type="STRING" id="267377.MMP1677"/>
<dbReference type="EnsemblBacteria" id="CAF31233">
    <property type="protein sequence ID" value="CAF31233"/>
    <property type="gene ID" value="MMP1677"/>
</dbReference>
<dbReference type="GeneID" id="2761549"/>
<dbReference type="KEGG" id="mmp:MMP1677"/>
<dbReference type="PATRIC" id="fig|267377.15.peg.1716"/>
<dbReference type="eggNOG" id="arCOG00476">
    <property type="taxonomic scope" value="Archaea"/>
</dbReference>
<dbReference type="HOGENOM" id="CLU_073311_1_1_2"/>
<dbReference type="OrthoDB" id="11851at2157"/>
<dbReference type="UniPathway" id="UPA00940"/>
<dbReference type="Proteomes" id="UP000000590">
    <property type="component" value="Chromosome"/>
</dbReference>
<dbReference type="GO" id="GO:0005886">
    <property type="term" value="C:plasma membrane"/>
    <property type="evidence" value="ECO:0007669"/>
    <property type="project" value="UniProtKB-SubCell"/>
</dbReference>
<dbReference type="GO" id="GO:0047295">
    <property type="term" value="F:geranylgeranylglycerol-phosphate geranylgeranyltransferase activity"/>
    <property type="evidence" value="ECO:0007669"/>
    <property type="project" value="UniProtKB-UniRule"/>
</dbReference>
<dbReference type="GO" id="GO:0000287">
    <property type="term" value="F:magnesium ion binding"/>
    <property type="evidence" value="ECO:0007669"/>
    <property type="project" value="UniProtKB-UniRule"/>
</dbReference>
<dbReference type="GO" id="GO:0046474">
    <property type="term" value="P:glycerophospholipid biosynthetic process"/>
    <property type="evidence" value="ECO:0007669"/>
    <property type="project" value="UniProtKB-UniRule"/>
</dbReference>
<dbReference type="CDD" id="cd13961">
    <property type="entry name" value="PT_UbiA_DGGGPS"/>
    <property type="match status" value="1"/>
</dbReference>
<dbReference type="Gene3D" id="1.10.357.140">
    <property type="entry name" value="UbiA prenyltransferase"/>
    <property type="match status" value="1"/>
</dbReference>
<dbReference type="Gene3D" id="1.20.120.1780">
    <property type="entry name" value="UbiA prenyltransferase"/>
    <property type="match status" value="1"/>
</dbReference>
<dbReference type="HAMAP" id="MF_01286">
    <property type="entry name" value="DGGGP_synth"/>
    <property type="match status" value="1"/>
</dbReference>
<dbReference type="InterPro" id="IPR023547">
    <property type="entry name" value="DGGGP_synth"/>
</dbReference>
<dbReference type="InterPro" id="IPR050475">
    <property type="entry name" value="Prenyltransferase_related"/>
</dbReference>
<dbReference type="InterPro" id="IPR000537">
    <property type="entry name" value="UbiA_prenyltransferase"/>
</dbReference>
<dbReference type="InterPro" id="IPR044878">
    <property type="entry name" value="UbiA_sf"/>
</dbReference>
<dbReference type="PANTHER" id="PTHR42723">
    <property type="entry name" value="CHLOROPHYLL SYNTHASE"/>
    <property type="match status" value="1"/>
</dbReference>
<dbReference type="PANTHER" id="PTHR42723:SF1">
    <property type="entry name" value="CHLOROPHYLL SYNTHASE, CHLOROPLASTIC"/>
    <property type="match status" value="1"/>
</dbReference>
<dbReference type="Pfam" id="PF01040">
    <property type="entry name" value="UbiA"/>
    <property type="match status" value="1"/>
</dbReference>
<gene>
    <name type="ordered locus">MMP1677</name>
</gene>
<sequence>MDIKAYFELIRLKNCLTASFGAFIGGLIASYFNLAMVDNLILASIVVFLVCGFGNALNDIYDLKIDRINKPKRPIPSKRITLNNAKVFSYSLVVMGLFISLFNISCFLMAVLNSIVLQQYASTYKKNKIIGNLIVAYLTGSVFIFGGIAVGNIDVTIMLFLCALFAMWSREIIKDYEDIEGDLKEKVISIPIKCGERSIYIAAFLLIFAIFLSPLPYLFGFFGIYYMISVVFCDLLFLFGIYKLVFNPSKMEAKKASRNIKIVTNLVLIAFLIGSLFK</sequence>
<feature type="chain" id="PRO_0000350702" description="Digeranylgeranylglyceryl phosphate synthase">
    <location>
        <begin position="1"/>
        <end position="278"/>
    </location>
</feature>
<feature type="transmembrane region" description="Helical" evidence="1">
    <location>
        <begin position="12"/>
        <end position="32"/>
    </location>
</feature>
<feature type="transmembrane region" description="Helical" evidence="1">
    <location>
        <begin position="34"/>
        <end position="54"/>
    </location>
</feature>
<feature type="transmembrane region" description="Helical" evidence="1">
    <location>
        <begin position="92"/>
        <end position="112"/>
    </location>
</feature>
<feature type="transmembrane region" description="Helical" evidence="1">
    <location>
        <begin position="129"/>
        <end position="149"/>
    </location>
</feature>
<feature type="transmembrane region" description="Helical" evidence="1">
    <location>
        <begin position="153"/>
        <end position="173"/>
    </location>
</feature>
<feature type="transmembrane region" description="Helical" evidence="1">
    <location>
        <begin position="204"/>
        <end position="224"/>
    </location>
</feature>
<feature type="transmembrane region" description="Helical" evidence="1">
    <location>
        <begin position="226"/>
        <end position="246"/>
    </location>
</feature>
<feature type="transmembrane region" description="Helical" evidence="1">
    <location>
        <begin position="257"/>
        <end position="277"/>
    </location>
</feature>
<comment type="function">
    <text evidence="1">Prenyltransferase that catalyzes the transfer of the geranylgeranyl moiety of geranylgeranyl diphosphate (GGPP) to the C2 hydroxyl of (S)-3-O-geranylgeranylglyceryl phosphate (GGGP). This reaction is the second ether-bond-formation step in the biosynthesis of archaeal membrane lipids.</text>
</comment>
<comment type="catalytic activity">
    <reaction evidence="1">
        <text>sn-3-O-(geranylgeranyl)glycerol 1-phosphate + (2E,6E,10E)-geranylgeranyl diphosphate = 2,3-bis-O-(geranylgeranyl)-sn-glycerol 1-phosphate + diphosphate</text>
        <dbReference type="Rhea" id="RHEA:18109"/>
        <dbReference type="ChEBI" id="CHEBI:33019"/>
        <dbReference type="ChEBI" id="CHEBI:57677"/>
        <dbReference type="ChEBI" id="CHEBI:58756"/>
        <dbReference type="ChEBI" id="CHEBI:58837"/>
        <dbReference type="EC" id="2.5.1.42"/>
    </reaction>
</comment>
<comment type="cofactor">
    <cofactor evidence="1">
        <name>Mg(2+)</name>
        <dbReference type="ChEBI" id="CHEBI:18420"/>
    </cofactor>
</comment>
<comment type="pathway">
    <text evidence="1">Membrane lipid metabolism; glycerophospholipid metabolism.</text>
</comment>
<comment type="subcellular location">
    <subcellularLocation>
        <location evidence="1">Cell membrane</location>
        <topology evidence="1">Multi-pass membrane protein</topology>
    </subcellularLocation>
</comment>
<comment type="similarity">
    <text evidence="1">Belongs to the UbiA prenyltransferase family. DGGGP synthase subfamily.</text>
</comment>
<name>DGGGP_METMP</name>